<feature type="chain" id="PRO_1000048475" description="DNA polymerase III PolC-type">
    <location>
        <begin position="1"/>
        <end position="1446"/>
    </location>
</feature>
<feature type="domain" description="Exonuclease">
    <location>
        <begin position="425"/>
        <end position="581"/>
    </location>
</feature>
<reference key="1">
    <citation type="journal article" date="2005" name="Nat. Biotechnol.">
        <title>The complete genome sequence of the meat-borne lactic acid bacterium Lactobacillus sakei 23K.</title>
        <authorList>
            <person name="Chaillou S."/>
            <person name="Champomier-Verges M.-C."/>
            <person name="Cornet M."/>
            <person name="Crutz-Le Coq A.-M."/>
            <person name="Dudez A.-M."/>
            <person name="Martin V."/>
            <person name="Beaufils S."/>
            <person name="Darbon-Rongere E."/>
            <person name="Bossy R."/>
            <person name="Loux V."/>
            <person name="Zagorec M."/>
        </authorList>
    </citation>
    <scope>NUCLEOTIDE SEQUENCE [LARGE SCALE GENOMIC DNA]</scope>
    <source>
        <strain>23K</strain>
    </source>
</reference>
<gene>
    <name evidence="1" type="primary">polC</name>
    <name type="ordered locus">LCA_1256</name>
</gene>
<dbReference type="EC" id="2.7.7.7" evidence="1"/>
<dbReference type="EMBL" id="CR936503">
    <property type="protein sequence ID" value="CAI55560.1"/>
    <property type="molecule type" value="Genomic_DNA"/>
</dbReference>
<dbReference type="RefSeq" id="WP_011374953.1">
    <property type="nucleotide sequence ID" value="NC_007576.1"/>
</dbReference>
<dbReference type="SMR" id="Q38W73"/>
<dbReference type="STRING" id="314315.LCA_1256"/>
<dbReference type="KEGG" id="lsa:LCA_1256"/>
<dbReference type="eggNOG" id="COG2176">
    <property type="taxonomic scope" value="Bacteria"/>
</dbReference>
<dbReference type="HOGENOM" id="CLU_003297_0_0_9"/>
<dbReference type="OrthoDB" id="9804290at2"/>
<dbReference type="Proteomes" id="UP000002707">
    <property type="component" value="Chromosome"/>
</dbReference>
<dbReference type="GO" id="GO:0005737">
    <property type="term" value="C:cytoplasm"/>
    <property type="evidence" value="ECO:0007669"/>
    <property type="project" value="UniProtKB-SubCell"/>
</dbReference>
<dbReference type="GO" id="GO:0008408">
    <property type="term" value="F:3'-5' exonuclease activity"/>
    <property type="evidence" value="ECO:0007669"/>
    <property type="project" value="UniProtKB-UniRule"/>
</dbReference>
<dbReference type="GO" id="GO:0003677">
    <property type="term" value="F:DNA binding"/>
    <property type="evidence" value="ECO:0007669"/>
    <property type="project" value="UniProtKB-UniRule"/>
</dbReference>
<dbReference type="GO" id="GO:0003887">
    <property type="term" value="F:DNA-directed DNA polymerase activity"/>
    <property type="evidence" value="ECO:0007669"/>
    <property type="project" value="UniProtKB-UniRule"/>
</dbReference>
<dbReference type="GO" id="GO:0006261">
    <property type="term" value="P:DNA-templated DNA replication"/>
    <property type="evidence" value="ECO:0007669"/>
    <property type="project" value="UniProtKB-UniRule"/>
</dbReference>
<dbReference type="CDD" id="cd06127">
    <property type="entry name" value="DEDDh"/>
    <property type="match status" value="1"/>
</dbReference>
<dbReference type="CDD" id="cd07435">
    <property type="entry name" value="PHP_PolIIIA_POLC"/>
    <property type="match status" value="1"/>
</dbReference>
<dbReference type="CDD" id="cd04484">
    <property type="entry name" value="polC_OBF"/>
    <property type="match status" value="1"/>
</dbReference>
<dbReference type="FunFam" id="3.30.420.10:FF:000045">
    <property type="entry name" value="3'-5' exonuclease DinG"/>
    <property type="match status" value="1"/>
</dbReference>
<dbReference type="Gene3D" id="1.10.150.870">
    <property type="match status" value="1"/>
</dbReference>
<dbReference type="Gene3D" id="3.30.1900.20">
    <property type="match status" value="2"/>
</dbReference>
<dbReference type="Gene3D" id="6.10.140.1510">
    <property type="match status" value="1"/>
</dbReference>
<dbReference type="Gene3D" id="3.20.20.140">
    <property type="entry name" value="Metal-dependent hydrolases"/>
    <property type="match status" value="2"/>
</dbReference>
<dbReference type="Gene3D" id="2.40.50.140">
    <property type="entry name" value="Nucleic acid-binding proteins"/>
    <property type="match status" value="1"/>
</dbReference>
<dbReference type="Gene3D" id="1.10.150.700">
    <property type="entry name" value="PolC, middle finger domain"/>
    <property type="match status" value="1"/>
</dbReference>
<dbReference type="Gene3D" id="3.30.420.10">
    <property type="entry name" value="Ribonuclease H-like superfamily/Ribonuclease H"/>
    <property type="match status" value="1"/>
</dbReference>
<dbReference type="HAMAP" id="MF_00356">
    <property type="entry name" value="DNApol_PolC"/>
    <property type="match status" value="1"/>
</dbReference>
<dbReference type="InterPro" id="IPR011708">
    <property type="entry name" value="DNA_pol3_alpha_NTPase_dom"/>
</dbReference>
<dbReference type="InterPro" id="IPR040982">
    <property type="entry name" value="DNA_pol3_finger"/>
</dbReference>
<dbReference type="InterPro" id="IPR024754">
    <property type="entry name" value="DNA_PolC-like_N_II"/>
</dbReference>
<dbReference type="InterPro" id="IPR028112">
    <property type="entry name" value="DNA_PolC-type_N_I"/>
</dbReference>
<dbReference type="InterPro" id="IPR004805">
    <property type="entry name" value="DnaE2/DnaE/PolC"/>
</dbReference>
<dbReference type="InterPro" id="IPR029460">
    <property type="entry name" value="DNAPol_HHH"/>
</dbReference>
<dbReference type="InterPro" id="IPR006054">
    <property type="entry name" value="DnaQ"/>
</dbReference>
<dbReference type="InterPro" id="IPR013520">
    <property type="entry name" value="Exonuclease_RNaseT/DNA_pol3"/>
</dbReference>
<dbReference type="InterPro" id="IPR012340">
    <property type="entry name" value="NA-bd_OB-fold"/>
</dbReference>
<dbReference type="InterPro" id="IPR004365">
    <property type="entry name" value="NA-bd_OB_tRNA"/>
</dbReference>
<dbReference type="InterPro" id="IPR004013">
    <property type="entry name" value="PHP_dom"/>
</dbReference>
<dbReference type="InterPro" id="IPR003141">
    <property type="entry name" value="Pol/His_phosphatase_N"/>
</dbReference>
<dbReference type="InterPro" id="IPR016195">
    <property type="entry name" value="Pol/histidinol_Pase-like"/>
</dbReference>
<dbReference type="InterPro" id="IPR006308">
    <property type="entry name" value="Pol_III_a_PolC-type_gram_pos"/>
</dbReference>
<dbReference type="InterPro" id="IPR044923">
    <property type="entry name" value="PolC_middle_finger_sf"/>
</dbReference>
<dbReference type="InterPro" id="IPR012337">
    <property type="entry name" value="RNaseH-like_sf"/>
</dbReference>
<dbReference type="InterPro" id="IPR036397">
    <property type="entry name" value="RNaseH_sf"/>
</dbReference>
<dbReference type="NCBIfam" id="TIGR00573">
    <property type="entry name" value="dnaq"/>
    <property type="match status" value="1"/>
</dbReference>
<dbReference type="NCBIfam" id="TIGR01405">
    <property type="entry name" value="polC_Gram_pos"/>
    <property type="match status" value="1"/>
</dbReference>
<dbReference type="NCBIfam" id="NF001688">
    <property type="entry name" value="PRK00448.1"/>
    <property type="match status" value="1"/>
</dbReference>
<dbReference type="PANTHER" id="PTHR32294:SF5">
    <property type="entry name" value="DNA POLYMERASE III POLC-TYPE"/>
    <property type="match status" value="1"/>
</dbReference>
<dbReference type="PANTHER" id="PTHR32294">
    <property type="entry name" value="DNA POLYMERASE III SUBUNIT ALPHA"/>
    <property type="match status" value="1"/>
</dbReference>
<dbReference type="Pfam" id="PF14480">
    <property type="entry name" value="DNA_pol3_a_NI"/>
    <property type="match status" value="1"/>
</dbReference>
<dbReference type="Pfam" id="PF11490">
    <property type="entry name" value="DNA_pol3_a_NII"/>
    <property type="match status" value="1"/>
</dbReference>
<dbReference type="Pfam" id="PF07733">
    <property type="entry name" value="DNA_pol3_alpha"/>
    <property type="match status" value="1"/>
</dbReference>
<dbReference type="Pfam" id="PF17657">
    <property type="entry name" value="DNA_pol3_finger"/>
    <property type="match status" value="1"/>
</dbReference>
<dbReference type="Pfam" id="PF14579">
    <property type="entry name" value="HHH_6"/>
    <property type="match status" value="1"/>
</dbReference>
<dbReference type="Pfam" id="PF02811">
    <property type="entry name" value="PHP"/>
    <property type="match status" value="2"/>
</dbReference>
<dbReference type="Pfam" id="PF00929">
    <property type="entry name" value="RNase_T"/>
    <property type="match status" value="1"/>
</dbReference>
<dbReference type="Pfam" id="PF01336">
    <property type="entry name" value="tRNA_anti-codon"/>
    <property type="match status" value="1"/>
</dbReference>
<dbReference type="SMART" id="SM00479">
    <property type="entry name" value="EXOIII"/>
    <property type="match status" value="1"/>
</dbReference>
<dbReference type="SMART" id="SM00481">
    <property type="entry name" value="POLIIIAc"/>
    <property type="match status" value="1"/>
</dbReference>
<dbReference type="SUPFAM" id="SSF160975">
    <property type="entry name" value="AF1531-like"/>
    <property type="match status" value="1"/>
</dbReference>
<dbReference type="SUPFAM" id="SSF50249">
    <property type="entry name" value="Nucleic acid-binding proteins"/>
    <property type="match status" value="1"/>
</dbReference>
<dbReference type="SUPFAM" id="SSF89550">
    <property type="entry name" value="PHP domain-like"/>
    <property type="match status" value="1"/>
</dbReference>
<dbReference type="SUPFAM" id="SSF53098">
    <property type="entry name" value="Ribonuclease H-like"/>
    <property type="match status" value="1"/>
</dbReference>
<evidence type="ECO:0000255" key="1">
    <source>
        <dbReference type="HAMAP-Rule" id="MF_00356"/>
    </source>
</evidence>
<sequence length="1446" mass="161867">MALDQTALFQKLLEQIALPADVAHYPGFKTGQVEQVIVHETSKRWTFKLHFDNVLPFAVYTAFEEHLEAAFQAIAAVSIEISTDAKELDGGVLAAYWEYVVNHSGIQSSLLHELCAKETPYIEGRKVLLVVENDIVKTFFINQAQTTIQAGYKRLGFPNFAIQPLIDESASQKSIEDFQAKRAVQDAERAQAAAEAIKKNEALKEKRKTEGKPVDGPIVMGRGINPAEPVRQMISITEEERSIVIEGFIFDKEVRVLRSGRQLLILKMTDYSSSFTVKKFSRDASDESLFAAIDKGMWFKVRGSVQEDNFMRDLTVNANDLVEVSHPKREDTATDGKRIEMHLHTNMSQMDATNPIGDYVKQAAKWGQPAIAVTDHYNLQAFPDAYAAGKKNGVKILYGVEVNLVNDGTPVVYNLRDQVLESAEYVIFDVETTGLSAVYDSIIELAAVKMRDGEVVASFDEFIDPERPLSAFTTQLTSITNEMVHGAKKEAEVLAMFKEFTGDAVLAGHNVSFDMGFLNAGYERNDIDLIDNPVIDTLELSRMLHPEYKNHKLDSLTKRYKINLEHHHRANADAESTGYLLYKLEKEAAENYDMVNVNQLNDRVGVGEFYKQARPAHAVLMAQTQAGLKNLFKLVSASMTEYYYRTPRLPKSKLDALREGILVGSACSNGEVFEAMMQKGYNEALDRAKYYDYIEVMPKAVYAPLLERELVRDNRALEEIIRNLVKVGEKLNKPVVATGDAHYLNPEDAIYRKILIHSMGGANPLNRSKLPDVHFRSTDEMLTAFDFLGPELAQELVVANPQKIADQIDEIVPVKDKLYTPKMAGAEDEIQTLTMNRAHELYGAELPEIVEARLKKELKSIIGNGFSVIYLISQKLVYKSGKDGYLVGSRGSVGSSLVATMTGITEVNPLPPHYRCSNCHYSEFFTKGEVGSGYDLADKDCPECGTPLDKDGHDIPFETFLGFHGDKVPDIDLNFSGDYQPVAHNYTKVLFGENNVFRAGTIGTVADKTAYGYVKAYERDTEQTFRGAEVDRLAKGSTGVKRTTGQHPAGIIVVPDYMDIYDFTPIQFPADDQDAAWKTTHFDFHSIHDNILKLDILGHDDPTMIRMLQDLSGIDPKSIPTDDPGVMALFSGTDSLGVTPEQINSKMGTLGVPEFGTRFVRGMLEETHPTTFSELLQISGLSHGTDVWLGNAEELINKGVVTLKDVIGCRDNIMMDLIHWGMDDSMSFNIMERVRKGKGIPDDWQQAMRDNENVPDWYIDSCLKIKYMFPKAHATAYILMALRIAYFKVYFPIIYYCAYFSVRASDFDLVAMAQGKEGVKARMKEITDKGMEASTKEKNLLTVLEIANECLERGITIKMVDIEKSDSSDFLIQDDHTLLAPFRAVPSLGDNVAKQIVSAREEKPFLSKEDLSNRGKVSKTLIEYLTENNVLNDLPDENQLSLFDMM</sequence>
<keyword id="KW-0963">Cytoplasm</keyword>
<keyword id="KW-0235">DNA replication</keyword>
<keyword id="KW-0239">DNA-directed DNA polymerase</keyword>
<keyword id="KW-0269">Exonuclease</keyword>
<keyword id="KW-0378">Hydrolase</keyword>
<keyword id="KW-0540">Nuclease</keyword>
<keyword id="KW-0548">Nucleotidyltransferase</keyword>
<keyword id="KW-1185">Reference proteome</keyword>
<keyword id="KW-0808">Transferase</keyword>
<comment type="function">
    <text evidence="1">Required for replicative DNA synthesis. This DNA polymerase also exhibits 3' to 5' exonuclease activity.</text>
</comment>
<comment type="catalytic activity">
    <reaction evidence="1">
        <text>DNA(n) + a 2'-deoxyribonucleoside 5'-triphosphate = DNA(n+1) + diphosphate</text>
        <dbReference type="Rhea" id="RHEA:22508"/>
        <dbReference type="Rhea" id="RHEA-COMP:17339"/>
        <dbReference type="Rhea" id="RHEA-COMP:17340"/>
        <dbReference type="ChEBI" id="CHEBI:33019"/>
        <dbReference type="ChEBI" id="CHEBI:61560"/>
        <dbReference type="ChEBI" id="CHEBI:173112"/>
        <dbReference type="EC" id="2.7.7.7"/>
    </reaction>
</comment>
<comment type="subcellular location">
    <subcellularLocation>
        <location evidence="1">Cytoplasm</location>
    </subcellularLocation>
</comment>
<comment type="similarity">
    <text evidence="1">Belongs to the DNA polymerase type-C family. PolC subfamily.</text>
</comment>
<protein>
    <recommendedName>
        <fullName evidence="1">DNA polymerase III PolC-type</fullName>
        <shortName evidence="1">PolIII</shortName>
        <ecNumber evidence="1">2.7.7.7</ecNumber>
    </recommendedName>
</protein>
<proteinExistence type="inferred from homology"/>
<name>DPO3_LATSS</name>
<accession>Q38W73</accession>
<organism>
    <name type="scientific">Latilactobacillus sakei subsp. sakei (strain 23K)</name>
    <name type="common">Lactobacillus sakei subsp. sakei</name>
    <dbReference type="NCBI Taxonomy" id="314315"/>
    <lineage>
        <taxon>Bacteria</taxon>
        <taxon>Bacillati</taxon>
        <taxon>Bacillota</taxon>
        <taxon>Bacilli</taxon>
        <taxon>Lactobacillales</taxon>
        <taxon>Lactobacillaceae</taxon>
        <taxon>Latilactobacillus</taxon>
    </lineage>
</organism>